<evidence type="ECO:0000255" key="1">
    <source>
        <dbReference type="HAMAP-Rule" id="MF_00741"/>
    </source>
</evidence>
<feature type="chain" id="PRO_1000046461" description="Phosphoribosylformylglycinamidine cyclo-ligase">
    <location>
        <begin position="1"/>
        <end position="352"/>
    </location>
</feature>
<name>PUR5_PSEP1</name>
<gene>
    <name evidence="1" type="primary">purM</name>
    <name type="ordered locus">Pput_4053</name>
</gene>
<keyword id="KW-0067">ATP-binding</keyword>
<keyword id="KW-0963">Cytoplasm</keyword>
<keyword id="KW-0436">Ligase</keyword>
<keyword id="KW-0547">Nucleotide-binding</keyword>
<keyword id="KW-0658">Purine biosynthesis</keyword>
<proteinExistence type="inferred from homology"/>
<protein>
    <recommendedName>
        <fullName evidence="1">Phosphoribosylformylglycinamidine cyclo-ligase</fullName>
        <ecNumber evidence="1">6.3.3.1</ecNumber>
    </recommendedName>
    <alternativeName>
        <fullName evidence="1">AIR synthase</fullName>
    </alternativeName>
    <alternativeName>
        <fullName evidence="1">AIRS</fullName>
    </alternativeName>
    <alternativeName>
        <fullName evidence="1">Phosphoribosyl-aminoimidazole synthetase</fullName>
    </alternativeName>
</protein>
<reference key="1">
    <citation type="submission" date="2007-05" db="EMBL/GenBank/DDBJ databases">
        <title>Complete sequence of Pseudomonas putida F1.</title>
        <authorList>
            <consortium name="US DOE Joint Genome Institute"/>
            <person name="Copeland A."/>
            <person name="Lucas S."/>
            <person name="Lapidus A."/>
            <person name="Barry K."/>
            <person name="Detter J.C."/>
            <person name="Glavina del Rio T."/>
            <person name="Hammon N."/>
            <person name="Israni S."/>
            <person name="Dalin E."/>
            <person name="Tice H."/>
            <person name="Pitluck S."/>
            <person name="Chain P."/>
            <person name="Malfatti S."/>
            <person name="Shin M."/>
            <person name="Vergez L."/>
            <person name="Schmutz J."/>
            <person name="Larimer F."/>
            <person name="Land M."/>
            <person name="Hauser L."/>
            <person name="Kyrpides N."/>
            <person name="Lykidis A."/>
            <person name="Parales R."/>
            <person name="Richardson P."/>
        </authorList>
    </citation>
    <scope>NUCLEOTIDE SEQUENCE [LARGE SCALE GENOMIC DNA]</scope>
    <source>
        <strain>ATCC 700007 / DSM 6899 / JCM 31910 / BCRC 17059 / LMG 24140 / F1</strain>
    </source>
</reference>
<comment type="catalytic activity">
    <reaction evidence="1">
        <text>2-formamido-N(1)-(5-O-phospho-beta-D-ribosyl)acetamidine + ATP = 5-amino-1-(5-phospho-beta-D-ribosyl)imidazole + ADP + phosphate + H(+)</text>
        <dbReference type="Rhea" id="RHEA:23032"/>
        <dbReference type="ChEBI" id="CHEBI:15378"/>
        <dbReference type="ChEBI" id="CHEBI:30616"/>
        <dbReference type="ChEBI" id="CHEBI:43474"/>
        <dbReference type="ChEBI" id="CHEBI:137981"/>
        <dbReference type="ChEBI" id="CHEBI:147287"/>
        <dbReference type="ChEBI" id="CHEBI:456216"/>
        <dbReference type="EC" id="6.3.3.1"/>
    </reaction>
</comment>
<comment type="pathway">
    <text evidence="1">Purine metabolism; IMP biosynthesis via de novo pathway; 5-amino-1-(5-phospho-D-ribosyl)imidazole from N(2)-formyl-N(1)-(5-phospho-D-ribosyl)glycinamide: step 2/2.</text>
</comment>
<comment type="subcellular location">
    <subcellularLocation>
        <location evidence="1">Cytoplasm</location>
    </subcellularLocation>
</comment>
<comment type="similarity">
    <text evidence="1">Belongs to the AIR synthase family.</text>
</comment>
<organism>
    <name type="scientific">Pseudomonas putida (strain ATCC 700007 / DSM 6899 / JCM 31910 / BCRC 17059 / LMG 24140 / F1)</name>
    <dbReference type="NCBI Taxonomy" id="351746"/>
    <lineage>
        <taxon>Bacteria</taxon>
        <taxon>Pseudomonadati</taxon>
        <taxon>Pseudomonadota</taxon>
        <taxon>Gammaproteobacteria</taxon>
        <taxon>Pseudomonadales</taxon>
        <taxon>Pseudomonadaceae</taxon>
        <taxon>Pseudomonas</taxon>
    </lineage>
</organism>
<dbReference type="EC" id="6.3.3.1" evidence="1"/>
<dbReference type="EMBL" id="CP000712">
    <property type="protein sequence ID" value="ABQ80177.1"/>
    <property type="molecule type" value="Genomic_DNA"/>
</dbReference>
<dbReference type="SMR" id="A5W7R7"/>
<dbReference type="KEGG" id="ppf:Pput_4053"/>
<dbReference type="eggNOG" id="COG0150">
    <property type="taxonomic scope" value="Bacteria"/>
</dbReference>
<dbReference type="HOGENOM" id="CLU_047116_0_0_6"/>
<dbReference type="UniPathway" id="UPA00074">
    <property type="reaction ID" value="UER00129"/>
</dbReference>
<dbReference type="GO" id="GO:0005829">
    <property type="term" value="C:cytosol"/>
    <property type="evidence" value="ECO:0007669"/>
    <property type="project" value="TreeGrafter"/>
</dbReference>
<dbReference type="GO" id="GO:0005524">
    <property type="term" value="F:ATP binding"/>
    <property type="evidence" value="ECO:0007669"/>
    <property type="project" value="UniProtKB-KW"/>
</dbReference>
<dbReference type="GO" id="GO:0004637">
    <property type="term" value="F:phosphoribosylamine-glycine ligase activity"/>
    <property type="evidence" value="ECO:0007669"/>
    <property type="project" value="TreeGrafter"/>
</dbReference>
<dbReference type="GO" id="GO:0004641">
    <property type="term" value="F:phosphoribosylformylglycinamidine cyclo-ligase activity"/>
    <property type="evidence" value="ECO:0007669"/>
    <property type="project" value="UniProtKB-UniRule"/>
</dbReference>
<dbReference type="GO" id="GO:0006189">
    <property type="term" value="P:'de novo' IMP biosynthetic process"/>
    <property type="evidence" value="ECO:0007669"/>
    <property type="project" value="UniProtKB-UniRule"/>
</dbReference>
<dbReference type="GO" id="GO:0046084">
    <property type="term" value="P:adenine biosynthetic process"/>
    <property type="evidence" value="ECO:0007669"/>
    <property type="project" value="TreeGrafter"/>
</dbReference>
<dbReference type="CDD" id="cd02196">
    <property type="entry name" value="PurM"/>
    <property type="match status" value="1"/>
</dbReference>
<dbReference type="FunFam" id="3.30.1330.10:FF:000001">
    <property type="entry name" value="Phosphoribosylformylglycinamidine cyclo-ligase"/>
    <property type="match status" value="1"/>
</dbReference>
<dbReference type="FunFam" id="3.90.650.10:FF:000001">
    <property type="entry name" value="Phosphoribosylformylglycinamidine cyclo-ligase"/>
    <property type="match status" value="1"/>
</dbReference>
<dbReference type="Gene3D" id="3.90.650.10">
    <property type="entry name" value="PurM-like C-terminal domain"/>
    <property type="match status" value="1"/>
</dbReference>
<dbReference type="Gene3D" id="3.30.1330.10">
    <property type="entry name" value="PurM-like, N-terminal domain"/>
    <property type="match status" value="1"/>
</dbReference>
<dbReference type="HAMAP" id="MF_00741">
    <property type="entry name" value="AIRS"/>
    <property type="match status" value="1"/>
</dbReference>
<dbReference type="InterPro" id="IPR010918">
    <property type="entry name" value="PurM-like_C_dom"/>
</dbReference>
<dbReference type="InterPro" id="IPR036676">
    <property type="entry name" value="PurM-like_C_sf"/>
</dbReference>
<dbReference type="InterPro" id="IPR016188">
    <property type="entry name" value="PurM-like_N"/>
</dbReference>
<dbReference type="InterPro" id="IPR036921">
    <property type="entry name" value="PurM-like_N_sf"/>
</dbReference>
<dbReference type="InterPro" id="IPR004733">
    <property type="entry name" value="PurM_cligase"/>
</dbReference>
<dbReference type="NCBIfam" id="TIGR00878">
    <property type="entry name" value="purM"/>
    <property type="match status" value="1"/>
</dbReference>
<dbReference type="PANTHER" id="PTHR10520:SF12">
    <property type="entry name" value="TRIFUNCTIONAL PURINE BIOSYNTHETIC PROTEIN ADENOSINE-3"/>
    <property type="match status" value="1"/>
</dbReference>
<dbReference type="PANTHER" id="PTHR10520">
    <property type="entry name" value="TRIFUNCTIONAL PURINE BIOSYNTHETIC PROTEIN ADENOSINE-3-RELATED"/>
    <property type="match status" value="1"/>
</dbReference>
<dbReference type="Pfam" id="PF00586">
    <property type="entry name" value="AIRS"/>
    <property type="match status" value="1"/>
</dbReference>
<dbReference type="Pfam" id="PF02769">
    <property type="entry name" value="AIRS_C"/>
    <property type="match status" value="1"/>
</dbReference>
<dbReference type="SUPFAM" id="SSF56042">
    <property type="entry name" value="PurM C-terminal domain-like"/>
    <property type="match status" value="1"/>
</dbReference>
<dbReference type="SUPFAM" id="SSF55326">
    <property type="entry name" value="PurM N-terminal domain-like"/>
    <property type="match status" value="1"/>
</dbReference>
<sequence length="352" mass="36942">MSKQPSLSYKDAGVDIDAGEALVERIKGVAKRTARPEVMGGLGGFGALCEIPAGYKQPVLVSGTDGVGTKLRLALNLNKHDSIGQDLVAMCVNDLVVCGAEPLFFLDYYATGKLNVDVAATVVTGIGAGCELAGCSLVGGETAEMPGMYEGEDYDLAGFCVGVVEKAEIIDGSKVATGDALIALPSSGPHSNGYSLIRKILEVSATDIENTQLDGKPLTDLLMAPTRIYVKPLLQLIKNTGAVKAMAHITGGGLLDNIPRVLPKNAQAVVDVASWQRPAVFDFLQEKGNVDEHEMHRVLNCGVGMVICVAQDQVEAALNELRAAGEQPWVIGHIAEAAEGAAQVELQNLKAH</sequence>
<accession>A5W7R7</accession>